<comment type="alternative products">
    <event type="alternative splicing"/>
    <isoform>
        <id>Q8R1N4-1</id>
        <name>1</name>
        <sequence type="displayed"/>
    </isoform>
    <isoform>
        <id>Q8R1N4-2</id>
        <name>2</name>
        <sequence type="described" ref="VSP_013678"/>
    </isoform>
    <isoform>
        <id>Q8R1N4-3</id>
        <name>3</name>
        <sequence type="described" ref="VSP_013679 VSP_013680"/>
    </isoform>
    <isoform>
        <id>Q8R1N4-4</id>
        <name>4</name>
        <sequence type="described" ref="VSP_013677"/>
    </isoform>
</comment>
<comment type="sequence caution" evidence="6">
    <conflict type="erroneous initiation">
        <sequence resource="EMBL-CDS" id="BAC98086"/>
    </conflict>
</comment>
<keyword id="KW-0025">Alternative splicing</keyword>
<keyword id="KW-0597">Phosphoprotein</keyword>
<keyword id="KW-1185">Reference proteome</keyword>
<feature type="chain" id="PRO_0000057986" description="NudC domain-containing protein 3">
    <location>
        <begin position="1"/>
        <end position="363"/>
    </location>
</feature>
<feature type="domain" description="CS" evidence="2">
    <location>
        <begin position="187"/>
        <end position="279"/>
    </location>
</feature>
<feature type="region of interest" description="Disordered" evidence="3">
    <location>
        <begin position="120"/>
        <end position="143"/>
    </location>
</feature>
<feature type="compositionally biased region" description="Basic and acidic residues" evidence="3">
    <location>
        <begin position="128"/>
        <end position="143"/>
    </location>
</feature>
<feature type="modified residue" description="Phosphoserine" evidence="1">
    <location>
        <position position="342"/>
    </location>
</feature>
<feature type="modified residue" description="Phosphoserine" evidence="1">
    <location>
        <position position="357"/>
    </location>
</feature>
<feature type="splice variant" id="VSP_013677" description="In isoform 4." evidence="4">
    <location>
        <begin position="1"/>
        <end position="295"/>
    </location>
</feature>
<feature type="splice variant" id="VSP_013678" description="In isoform 2." evidence="5">
    <location>
        <begin position="217"/>
        <end position="264"/>
    </location>
</feature>
<feature type="splice variant" id="VSP_013679" description="In isoform 3." evidence="5">
    <original>NLSKVGEYWWSAILEGEEPIDIDKINKERSMATVD</original>
    <variation>SEVTCVQSSHQGFAPAMMTCVQVFPIISEVFNYSN</variation>
    <location>
        <begin position="266"/>
        <end position="300"/>
    </location>
</feature>
<feature type="splice variant" id="VSP_013680" description="In isoform 3." evidence="5">
    <location>
        <begin position="301"/>
        <end position="363"/>
    </location>
</feature>
<organism>
    <name type="scientific">Mus musculus</name>
    <name type="common">Mouse</name>
    <dbReference type="NCBI Taxonomy" id="10090"/>
    <lineage>
        <taxon>Eukaryota</taxon>
        <taxon>Metazoa</taxon>
        <taxon>Chordata</taxon>
        <taxon>Craniata</taxon>
        <taxon>Vertebrata</taxon>
        <taxon>Euteleostomi</taxon>
        <taxon>Mammalia</taxon>
        <taxon>Eutheria</taxon>
        <taxon>Euarchontoglires</taxon>
        <taxon>Glires</taxon>
        <taxon>Rodentia</taxon>
        <taxon>Myomorpha</taxon>
        <taxon>Muroidea</taxon>
        <taxon>Muridae</taxon>
        <taxon>Murinae</taxon>
        <taxon>Mus</taxon>
        <taxon>Mus</taxon>
    </lineage>
</organism>
<dbReference type="EMBL" id="AK129276">
    <property type="protein sequence ID" value="BAC98086.1"/>
    <property type="status" value="ALT_INIT"/>
    <property type="molecule type" value="mRNA"/>
</dbReference>
<dbReference type="EMBL" id="AK046219">
    <property type="protein sequence ID" value="BAC32642.1"/>
    <property type="molecule type" value="mRNA"/>
</dbReference>
<dbReference type="EMBL" id="AK049739">
    <property type="protein sequence ID" value="BAC33899.1"/>
    <property type="molecule type" value="mRNA"/>
</dbReference>
<dbReference type="EMBL" id="AK050476">
    <property type="protein sequence ID" value="BAC34277.1"/>
    <property type="molecule type" value="mRNA"/>
</dbReference>
<dbReference type="EMBL" id="AK159391">
    <property type="protein sequence ID" value="BAE35045.1"/>
    <property type="molecule type" value="mRNA"/>
</dbReference>
<dbReference type="EMBL" id="AK159458">
    <property type="protein sequence ID" value="BAE35100.1"/>
    <property type="molecule type" value="mRNA"/>
</dbReference>
<dbReference type="EMBL" id="AK169797">
    <property type="protein sequence ID" value="BAE41373.1"/>
    <property type="molecule type" value="mRNA"/>
</dbReference>
<dbReference type="EMBL" id="AK170329">
    <property type="protein sequence ID" value="BAE41723.1"/>
    <property type="molecule type" value="mRNA"/>
</dbReference>
<dbReference type="EMBL" id="AK171224">
    <property type="protein sequence ID" value="BAE42326.1"/>
    <property type="molecule type" value="mRNA"/>
</dbReference>
<dbReference type="EMBL" id="AL607152">
    <property type="status" value="NOT_ANNOTATED_CDS"/>
    <property type="molecule type" value="Genomic_DNA"/>
</dbReference>
<dbReference type="EMBL" id="AL611926">
    <property type="status" value="NOT_ANNOTATED_CDS"/>
    <property type="molecule type" value="Genomic_DNA"/>
</dbReference>
<dbReference type="EMBL" id="BC024322">
    <property type="protein sequence ID" value="AAH24322.3"/>
    <property type="molecule type" value="mRNA"/>
</dbReference>
<dbReference type="EMBL" id="BC037090">
    <property type="protein sequence ID" value="AAH37090.1"/>
    <property type="molecule type" value="mRNA"/>
</dbReference>
<dbReference type="EMBL" id="BC057603">
    <property type="protein sequence ID" value="AAH57603.1"/>
    <property type="molecule type" value="mRNA"/>
</dbReference>
<dbReference type="CCDS" id="CCDS24412.1">
    <molecule id="Q8R1N4-1"/>
</dbReference>
<dbReference type="RefSeq" id="NP_001350375.1">
    <molecule id="Q8R1N4-2"/>
    <property type="nucleotide sequence ID" value="NM_001363446.2"/>
</dbReference>
<dbReference type="RefSeq" id="NP_776109.1">
    <molecule id="Q8R1N4-1"/>
    <property type="nucleotide sequence ID" value="NM_173748.6"/>
</dbReference>
<dbReference type="RefSeq" id="XP_006514666.1">
    <property type="nucleotide sequence ID" value="XM_006514603.2"/>
</dbReference>
<dbReference type="SMR" id="Q8R1N4"/>
<dbReference type="BioGRID" id="229094">
    <property type="interactions" value="9"/>
</dbReference>
<dbReference type="FunCoup" id="Q8R1N4">
    <property type="interactions" value="1716"/>
</dbReference>
<dbReference type="IntAct" id="Q8R1N4">
    <property type="interactions" value="1"/>
</dbReference>
<dbReference type="STRING" id="10090.ENSMUSP00000064668"/>
<dbReference type="GlyGen" id="Q8R1N4">
    <property type="glycosylation" value="1 site, 1 N-linked glycan (1 site)"/>
</dbReference>
<dbReference type="iPTMnet" id="Q8R1N4"/>
<dbReference type="PhosphoSitePlus" id="Q8R1N4"/>
<dbReference type="PaxDb" id="10090-ENSMUSP00000064668"/>
<dbReference type="PeptideAtlas" id="Q8R1N4"/>
<dbReference type="ProteomicsDB" id="287848">
    <molecule id="Q8R1N4-1"/>
</dbReference>
<dbReference type="ProteomicsDB" id="287849">
    <molecule id="Q8R1N4-2"/>
</dbReference>
<dbReference type="ProteomicsDB" id="287850">
    <molecule id="Q8R1N4-3"/>
</dbReference>
<dbReference type="ProteomicsDB" id="287851">
    <molecule id="Q8R1N4-4"/>
</dbReference>
<dbReference type="Pumba" id="Q8R1N4"/>
<dbReference type="Antibodypedia" id="13393">
    <property type="antibodies" value="99 antibodies from 25 providers"/>
</dbReference>
<dbReference type="DNASU" id="209586"/>
<dbReference type="Ensembl" id="ENSMUST00000066496.10">
    <molecule id="Q8R1N4-1"/>
    <property type="protein sequence ID" value="ENSMUSP00000064668.4"/>
    <property type="gene ID" value="ENSMUSG00000053838.15"/>
</dbReference>
<dbReference type="GeneID" id="209586"/>
<dbReference type="KEGG" id="mmu:209586"/>
<dbReference type="UCSC" id="uc007hxy.2">
    <molecule id="Q8R1N4-1"/>
    <property type="organism name" value="mouse"/>
</dbReference>
<dbReference type="UCSC" id="uc007hxz.2">
    <molecule id="Q8R1N4-2"/>
    <property type="organism name" value="mouse"/>
</dbReference>
<dbReference type="UCSC" id="uc007hya.2">
    <molecule id="Q8R1N4-3"/>
    <property type="organism name" value="mouse"/>
</dbReference>
<dbReference type="AGR" id="MGI:2144158"/>
<dbReference type="CTD" id="23386"/>
<dbReference type="MGI" id="MGI:2144158">
    <property type="gene designation" value="Nudcd3"/>
</dbReference>
<dbReference type="VEuPathDB" id="HostDB:ENSMUSG00000053838"/>
<dbReference type="eggNOG" id="KOG2265">
    <property type="taxonomic scope" value="Eukaryota"/>
</dbReference>
<dbReference type="GeneTree" id="ENSGT00940000158444"/>
<dbReference type="HOGENOM" id="CLU_047332_0_0_1"/>
<dbReference type="InParanoid" id="Q8R1N4"/>
<dbReference type="OMA" id="EINIEMP"/>
<dbReference type="OrthoDB" id="416217at2759"/>
<dbReference type="PhylomeDB" id="Q8R1N4"/>
<dbReference type="TreeFam" id="TF300147"/>
<dbReference type="BioGRID-ORCS" id="209586">
    <property type="hits" value="25 hits in 79 CRISPR screens"/>
</dbReference>
<dbReference type="ChiTaRS" id="Nudcd3">
    <property type="organism name" value="mouse"/>
</dbReference>
<dbReference type="PRO" id="PR:Q8R1N4"/>
<dbReference type="Proteomes" id="UP000000589">
    <property type="component" value="Chromosome 11"/>
</dbReference>
<dbReference type="RNAct" id="Q8R1N4">
    <property type="molecule type" value="protein"/>
</dbReference>
<dbReference type="Bgee" id="ENSMUSG00000053838">
    <property type="expression patterns" value="Expressed in dentate gyrus of hippocampal formation granule cell and 248 other cell types or tissues"/>
</dbReference>
<dbReference type="ExpressionAtlas" id="Q8R1N4">
    <property type="expression patterns" value="baseline and differential"/>
</dbReference>
<dbReference type="GO" id="GO:0005868">
    <property type="term" value="C:cytoplasmic dynein complex"/>
    <property type="evidence" value="ECO:0007669"/>
    <property type="project" value="Ensembl"/>
</dbReference>
<dbReference type="GO" id="GO:0060271">
    <property type="term" value="P:cilium assembly"/>
    <property type="evidence" value="ECO:0007669"/>
    <property type="project" value="Ensembl"/>
</dbReference>
<dbReference type="GO" id="GO:1905793">
    <property type="term" value="P:protein localization to pericentriolar material"/>
    <property type="evidence" value="ECO:0007669"/>
    <property type="project" value="Ensembl"/>
</dbReference>
<dbReference type="CDD" id="cd06495">
    <property type="entry name" value="p23_NUDCD3_like"/>
    <property type="match status" value="1"/>
</dbReference>
<dbReference type="FunFam" id="2.60.40.790:FF:000023">
    <property type="entry name" value="NudC domain-containing protein 3"/>
    <property type="match status" value="1"/>
</dbReference>
<dbReference type="Gene3D" id="2.60.40.790">
    <property type="match status" value="1"/>
</dbReference>
<dbReference type="InterPro" id="IPR007052">
    <property type="entry name" value="CS_dom"/>
</dbReference>
<dbReference type="InterPro" id="IPR008978">
    <property type="entry name" value="HSP20-like_chaperone"/>
</dbReference>
<dbReference type="InterPro" id="IPR037898">
    <property type="entry name" value="NudC_fam"/>
</dbReference>
<dbReference type="InterPro" id="IPR025934">
    <property type="entry name" value="NudC_N_dom"/>
</dbReference>
<dbReference type="InterPro" id="IPR037905">
    <property type="entry name" value="p23_NUDCD3"/>
</dbReference>
<dbReference type="PANTHER" id="PTHR12356">
    <property type="entry name" value="NUCLEAR MOVEMENT PROTEIN NUDC"/>
    <property type="match status" value="1"/>
</dbReference>
<dbReference type="PANTHER" id="PTHR12356:SF19">
    <property type="entry name" value="NUDC DOMAIN-CONTAINING PROTEIN 3"/>
    <property type="match status" value="1"/>
</dbReference>
<dbReference type="Pfam" id="PF04969">
    <property type="entry name" value="CS"/>
    <property type="match status" value="1"/>
</dbReference>
<dbReference type="Pfam" id="PF14050">
    <property type="entry name" value="Nudc_N"/>
    <property type="match status" value="1"/>
</dbReference>
<dbReference type="SUPFAM" id="SSF49764">
    <property type="entry name" value="HSP20-like chaperones"/>
    <property type="match status" value="1"/>
</dbReference>
<dbReference type="PROSITE" id="PS51203">
    <property type="entry name" value="CS"/>
    <property type="match status" value="1"/>
</dbReference>
<name>NUDC3_MOUSE</name>
<reference key="1">
    <citation type="journal article" date="2003" name="DNA Res.">
        <title>Prediction of the coding sequences of mouse homologues of KIAA gene: III. The complete nucleotide sequences of 500 mouse KIAA-homologous cDNAs identified by screening of terminal sequences of cDNA clones randomly sampled from size-fractionated libraries.</title>
        <authorList>
            <person name="Okazaki N."/>
            <person name="Kikuno R."/>
            <person name="Ohara R."/>
            <person name="Inamoto S."/>
            <person name="Koseki H."/>
            <person name="Hiraoka S."/>
            <person name="Saga Y."/>
            <person name="Nagase T."/>
            <person name="Ohara O."/>
            <person name="Koga H."/>
        </authorList>
    </citation>
    <scope>NUCLEOTIDE SEQUENCE [LARGE SCALE MRNA] (ISOFORM 4)</scope>
    <source>
        <tissue>Brain</tissue>
    </source>
</reference>
<reference key="2">
    <citation type="journal article" date="2005" name="Science">
        <title>The transcriptional landscape of the mammalian genome.</title>
        <authorList>
            <person name="Carninci P."/>
            <person name="Kasukawa T."/>
            <person name="Katayama S."/>
            <person name="Gough J."/>
            <person name="Frith M.C."/>
            <person name="Maeda N."/>
            <person name="Oyama R."/>
            <person name="Ravasi T."/>
            <person name="Lenhard B."/>
            <person name="Wells C."/>
            <person name="Kodzius R."/>
            <person name="Shimokawa K."/>
            <person name="Bajic V.B."/>
            <person name="Brenner S.E."/>
            <person name="Batalov S."/>
            <person name="Forrest A.R."/>
            <person name="Zavolan M."/>
            <person name="Davis M.J."/>
            <person name="Wilming L.G."/>
            <person name="Aidinis V."/>
            <person name="Allen J.E."/>
            <person name="Ambesi-Impiombato A."/>
            <person name="Apweiler R."/>
            <person name="Aturaliya R.N."/>
            <person name="Bailey T.L."/>
            <person name="Bansal M."/>
            <person name="Baxter L."/>
            <person name="Beisel K.W."/>
            <person name="Bersano T."/>
            <person name="Bono H."/>
            <person name="Chalk A.M."/>
            <person name="Chiu K.P."/>
            <person name="Choudhary V."/>
            <person name="Christoffels A."/>
            <person name="Clutterbuck D.R."/>
            <person name="Crowe M.L."/>
            <person name="Dalla E."/>
            <person name="Dalrymple B.P."/>
            <person name="de Bono B."/>
            <person name="Della Gatta G."/>
            <person name="di Bernardo D."/>
            <person name="Down T."/>
            <person name="Engstrom P."/>
            <person name="Fagiolini M."/>
            <person name="Faulkner G."/>
            <person name="Fletcher C.F."/>
            <person name="Fukushima T."/>
            <person name="Furuno M."/>
            <person name="Futaki S."/>
            <person name="Gariboldi M."/>
            <person name="Georgii-Hemming P."/>
            <person name="Gingeras T.R."/>
            <person name="Gojobori T."/>
            <person name="Green R.E."/>
            <person name="Gustincich S."/>
            <person name="Harbers M."/>
            <person name="Hayashi Y."/>
            <person name="Hensch T.K."/>
            <person name="Hirokawa N."/>
            <person name="Hill D."/>
            <person name="Huminiecki L."/>
            <person name="Iacono M."/>
            <person name="Ikeo K."/>
            <person name="Iwama A."/>
            <person name="Ishikawa T."/>
            <person name="Jakt M."/>
            <person name="Kanapin A."/>
            <person name="Katoh M."/>
            <person name="Kawasawa Y."/>
            <person name="Kelso J."/>
            <person name="Kitamura H."/>
            <person name="Kitano H."/>
            <person name="Kollias G."/>
            <person name="Krishnan S.P."/>
            <person name="Kruger A."/>
            <person name="Kummerfeld S.K."/>
            <person name="Kurochkin I.V."/>
            <person name="Lareau L.F."/>
            <person name="Lazarevic D."/>
            <person name="Lipovich L."/>
            <person name="Liu J."/>
            <person name="Liuni S."/>
            <person name="McWilliam S."/>
            <person name="Madan Babu M."/>
            <person name="Madera M."/>
            <person name="Marchionni L."/>
            <person name="Matsuda H."/>
            <person name="Matsuzawa S."/>
            <person name="Miki H."/>
            <person name="Mignone F."/>
            <person name="Miyake S."/>
            <person name="Morris K."/>
            <person name="Mottagui-Tabar S."/>
            <person name="Mulder N."/>
            <person name="Nakano N."/>
            <person name="Nakauchi H."/>
            <person name="Ng P."/>
            <person name="Nilsson R."/>
            <person name="Nishiguchi S."/>
            <person name="Nishikawa S."/>
            <person name="Nori F."/>
            <person name="Ohara O."/>
            <person name="Okazaki Y."/>
            <person name="Orlando V."/>
            <person name="Pang K.C."/>
            <person name="Pavan W.J."/>
            <person name="Pavesi G."/>
            <person name="Pesole G."/>
            <person name="Petrovsky N."/>
            <person name="Piazza S."/>
            <person name="Reed J."/>
            <person name="Reid J.F."/>
            <person name="Ring B.Z."/>
            <person name="Ringwald M."/>
            <person name="Rost B."/>
            <person name="Ruan Y."/>
            <person name="Salzberg S.L."/>
            <person name="Sandelin A."/>
            <person name="Schneider C."/>
            <person name="Schoenbach C."/>
            <person name="Sekiguchi K."/>
            <person name="Semple C.A."/>
            <person name="Seno S."/>
            <person name="Sessa L."/>
            <person name="Sheng Y."/>
            <person name="Shibata Y."/>
            <person name="Shimada H."/>
            <person name="Shimada K."/>
            <person name="Silva D."/>
            <person name="Sinclair B."/>
            <person name="Sperling S."/>
            <person name="Stupka E."/>
            <person name="Sugiura K."/>
            <person name="Sultana R."/>
            <person name="Takenaka Y."/>
            <person name="Taki K."/>
            <person name="Tammoja K."/>
            <person name="Tan S.L."/>
            <person name="Tang S."/>
            <person name="Taylor M.S."/>
            <person name="Tegner J."/>
            <person name="Teichmann S.A."/>
            <person name="Ueda H.R."/>
            <person name="van Nimwegen E."/>
            <person name="Verardo R."/>
            <person name="Wei C.L."/>
            <person name="Yagi K."/>
            <person name="Yamanishi H."/>
            <person name="Zabarovsky E."/>
            <person name="Zhu S."/>
            <person name="Zimmer A."/>
            <person name="Hide W."/>
            <person name="Bult C."/>
            <person name="Grimmond S.M."/>
            <person name="Teasdale R.D."/>
            <person name="Liu E.T."/>
            <person name="Brusic V."/>
            <person name="Quackenbush J."/>
            <person name="Wahlestedt C."/>
            <person name="Mattick J.S."/>
            <person name="Hume D.A."/>
            <person name="Kai C."/>
            <person name="Sasaki D."/>
            <person name="Tomaru Y."/>
            <person name="Fukuda S."/>
            <person name="Kanamori-Katayama M."/>
            <person name="Suzuki M."/>
            <person name="Aoki J."/>
            <person name="Arakawa T."/>
            <person name="Iida J."/>
            <person name="Imamura K."/>
            <person name="Itoh M."/>
            <person name="Kato T."/>
            <person name="Kawaji H."/>
            <person name="Kawagashira N."/>
            <person name="Kawashima T."/>
            <person name="Kojima M."/>
            <person name="Kondo S."/>
            <person name="Konno H."/>
            <person name="Nakano K."/>
            <person name="Ninomiya N."/>
            <person name="Nishio T."/>
            <person name="Okada M."/>
            <person name="Plessy C."/>
            <person name="Shibata K."/>
            <person name="Shiraki T."/>
            <person name="Suzuki S."/>
            <person name="Tagami M."/>
            <person name="Waki K."/>
            <person name="Watahiki A."/>
            <person name="Okamura-Oho Y."/>
            <person name="Suzuki H."/>
            <person name="Kawai J."/>
            <person name="Hayashizaki Y."/>
        </authorList>
    </citation>
    <scope>NUCLEOTIDE SEQUENCE [LARGE SCALE MRNA] (ISOFORMS 1; 2 AND 3)</scope>
    <source>
        <strain>C57BL/6J</strain>
        <strain>NOD</strain>
        <tissue>Corpora quadrigemina</tissue>
        <tissue>Pancreas</tissue>
        <tissue>Spinal cord</tissue>
        <tissue>Thymus</tissue>
    </source>
</reference>
<reference key="3">
    <citation type="journal article" date="2009" name="PLoS Biol.">
        <title>Lineage-specific biology revealed by a finished genome assembly of the mouse.</title>
        <authorList>
            <person name="Church D.M."/>
            <person name="Goodstadt L."/>
            <person name="Hillier L.W."/>
            <person name="Zody M.C."/>
            <person name="Goldstein S."/>
            <person name="She X."/>
            <person name="Bult C.J."/>
            <person name="Agarwala R."/>
            <person name="Cherry J.L."/>
            <person name="DiCuccio M."/>
            <person name="Hlavina W."/>
            <person name="Kapustin Y."/>
            <person name="Meric P."/>
            <person name="Maglott D."/>
            <person name="Birtle Z."/>
            <person name="Marques A.C."/>
            <person name="Graves T."/>
            <person name="Zhou S."/>
            <person name="Teague B."/>
            <person name="Potamousis K."/>
            <person name="Churas C."/>
            <person name="Place M."/>
            <person name="Herschleb J."/>
            <person name="Runnheim R."/>
            <person name="Forrest D."/>
            <person name="Amos-Landgraf J."/>
            <person name="Schwartz D.C."/>
            <person name="Cheng Z."/>
            <person name="Lindblad-Toh K."/>
            <person name="Eichler E.E."/>
            <person name="Ponting C.P."/>
        </authorList>
    </citation>
    <scope>NUCLEOTIDE SEQUENCE [LARGE SCALE GENOMIC DNA]</scope>
    <source>
        <strain>C57BL/6J</strain>
    </source>
</reference>
<reference key="4">
    <citation type="journal article" date="2004" name="Genome Res.">
        <title>The status, quality, and expansion of the NIH full-length cDNA project: the Mammalian Gene Collection (MGC).</title>
        <authorList>
            <consortium name="The MGC Project Team"/>
        </authorList>
    </citation>
    <scope>NUCLEOTIDE SEQUENCE [LARGE SCALE MRNA] (ISOFORM 1)</scope>
    <source>
        <strain>FVB/N</strain>
        <tissue>Brain</tissue>
        <tissue>Kidney</tissue>
        <tissue>Liver</tissue>
    </source>
</reference>
<reference key="5">
    <citation type="journal article" date="2010" name="Cell">
        <title>A tissue-specific atlas of mouse protein phosphorylation and expression.</title>
        <authorList>
            <person name="Huttlin E.L."/>
            <person name="Jedrychowski M.P."/>
            <person name="Elias J.E."/>
            <person name="Goswami T."/>
            <person name="Rad R."/>
            <person name="Beausoleil S.A."/>
            <person name="Villen J."/>
            <person name="Haas W."/>
            <person name="Sowa M.E."/>
            <person name="Gygi S.P."/>
        </authorList>
    </citation>
    <scope>IDENTIFICATION BY MASS SPECTROMETRY [LARGE SCALE ANALYSIS]</scope>
    <source>
        <tissue>Brain</tissue>
        <tissue>Brown adipose tissue</tissue>
        <tissue>Kidney</tissue>
        <tissue>Lung</tissue>
        <tissue>Spleen</tissue>
        <tissue>Testis</tissue>
    </source>
</reference>
<proteinExistence type="evidence at protein level"/>
<evidence type="ECO:0000250" key="1">
    <source>
        <dbReference type="UniProtKB" id="Q8IVD9"/>
    </source>
</evidence>
<evidence type="ECO:0000255" key="2">
    <source>
        <dbReference type="PROSITE-ProRule" id="PRU00547"/>
    </source>
</evidence>
<evidence type="ECO:0000256" key="3">
    <source>
        <dbReference type="SAM" id="MobiDB-lite"/>
    </source>
</evidence>
<evidence type="ECO:0000303" key="4">
    <source>
    </source>
</evidence>
<evidence type="ECO:0000303" key="5">
    <source>
    </source>
</evidence>
<evidence type="ECO:0000305" key="6"/>
<sequence>MEPGAAELYDQALLGILQHVGNVQDFLRVLFGFLYRKTDFYRLLRHPSDRMGFPPGAAQALVLQVFKTFDHMARQDDEKRKKELEEKIRKKEEEAKALPAAETEKVAVPVPVQEVEIDAAADLSGPQEVEKEEPPGSQDPEHTVTHGLEKAEAPGTVSSAAEGPKDPPVLPRIQEQFQKNPDSYNGAIRENYIWSQDYTDLEVRVPVPKHVMKGKQVSVALSSGTIRVAMVEENGERVLMEGKLTHKINTESSLWSLEPGRCVLVNLSKVGEYWWSAILEGEEPIDIDKINKERSMATVDEEEQAVLDRLTFDYHQKLQGKPQSHELKVHEMLKKGWDAEGSPFRGQRFDPAMFNISPGAVQF</sequence>
<accession>Q8R1N4</accession>
<accession>Q3TX16</accession>
<accession>Q5SVV6</accession>
<accession>Q5SVV7</accession>
<accession>Q6PFE4</accession>
<accession>Q6ZPZ2</accession>
<accession>Q8BL70</accession>
<accession>Q8BWN3</accession>
<accession>Q8BWW5</accession>
<protein>
    <recommendedName>
        <fullName>NudC domain-containing protein 3</fullName>
    </recommendedName>
</protein>
<gene>
    <name type="primary">Nudcd3</name>
    <name type="synonym">Kiaa1068</name>
</gene>